<evidence type="ECO:0000250" key="1">
    <source>
        <dbReference type="UniProtKB" id="A0A0A1HA03"/>
    </source>
</evidence>
<evidence type="ECO:0000250" key="2">
    <source>
        <dbReference type="UniProtKB" id="B3TKC8"/>
    </source>
</evidence>
<evidence type="ECO:0000250" key="3">
    <source>
        <dbReference type="UniProtKB" id="P51094"/>
    </source>
</evidence>
<evidence type="ECO:0000303" key="4">
    <source ref="1"/>
</evidence>
<evidence type="ECO:0000305" key="5"/>
<comment type="function">
    <text evidence="2">Glycosyltransferase that possesses phloretin 2'-O-glycosyltransferase activity. Converts phloretin to phlorizin (phloretin 2'-O-glucoside), a potent antioxidant. Is specific for phloretin and does not possess glycosyltransferase activity toward caffeic acid, catechin, chlorogenic acid, 2-coumaric acid, 3-coumaric acid, 4-coumaric acid, cyanidin, 3,4-dihydroxyhydrocinnamic acid, epicatechin, 3-hydroxybenzoic acid, naringenin, 3,4-dihydroxybenzoic acid, quercetin and rutin. Can glycosylate phloretin in the presence of UDP-glucose, UDP-xylose and UDP-galactose.</text>
</comment>
<comment type="catalytic activity">
    <reaction evidence="2">
        <text>phloretin + UDP-alpha-D-glucose = phlorizin + UDP + H(+)</text>
        <dbReference type="Rhea" id="RHEA:51576"/>
        <dbReference type="ChEBI" id="CHEBI:8113"/>
        <dbReference type="ChEBI" id="CHEBI:15378"/>
        <dbReference type="ChEBI" id="CHEBI:17276"/>
        <dbReference type="ChEBI" id="CHEBI:58223"/>
        <dbReference type="ChEBI" id="CHEBI:58885"/>
        <dbReference type="EC" id="2.4.1.357"/>
    </reaction>
    <physiologicalReaction direction="left-to-right" evidence="2">
        <dbReference type="Rhea" id="RHEA:51577"/>
    </physiologicalReaction>
</comment>
<comment type="similarity">
    <text evidence="5">Belongs to the UDP-glycosyltransferase family.</text>
</comment>
<feature type="chain" id="PRO_0000434452" description="Phloretin 2'-O-glucosyltransferase">
    <location>
        <begin position="1"/>
        <end position="483"/>
    </location>
</feature>
<feature type="active site" description="Proton acceptor" evidence="1">
    <location>
        <position position="15"/>
    </location>
</feature>
<feature type="active site" description="Charge relay" evidence="1">
    <location>
        <position position="118"/>
    </location>
</feature>
<feature type="binding site" evidence="3">
    <location>
        <position position="15"/>
    </location>
    <ligand>
        <name>an anthocyanidin</name>
        <dbReference type="ChEBI" id="CHEBI:143576"/>
    </ligand>
</feature>
<feature type="binding site" evidence="1">
    <location>
        <position position="140"/>
    </location>
    <ligand>
        <name>UDP-alpha-D-glucose</name>
        <dbReference type="ChEBI" id="CHEBI:58885"/>
    </ligand>
</feature>
<feature type="binding site" evidence="1">
    <location>
        <position position="360"/>
    </location>
    <ligand>
        <name>UDP-alpha-D-glucose</name>
        <dbReference type="ChEBI" id="CHEBI:58885"/>
    </ligand>
</feature>
<feature type="binding site" evidence="1">
    <location>
        <position position="362"/>
    </location>
    <ligand>
        <name>UDP-alpha-D-glucose</name>
        <dbReference type="ChEBI" id="CHEBI:58885"/>
    </ligand>
</feature>
<feature type="binding site" evidence="1">
    <location>
        <position position="377"/>
    </location>
    <ligand>
        <name>UDP-alpha-D-glucose</name>
        <dbReference type="ChEBI" id="CHEBI:58885"/>
    </ligand>
</feature>
<feature type="binding site" evidence="1">
    <location>
        <position position="380"/>
    </location>
    <ligand>
        <name>UDP-alpha-D-glucose</name>
        <dbReference type="ChEBI" id="CHEBI:58885"/>
    </ligand>
</feature>
<feature type="binding site" evidence="1">
    <location>
        <position position="381"/>
    </location>
    <ligand>
        <name>UDP-alpha-D-glucose</name>
        <dbReference type="ChEBI" id="CHEBI:58885"/>
    </ligand>
</feature>
<feature type="binding site" evidence="1">
    <location>
        <position position="382"/>
    </location>
    <ligand>
        <name>UDP-alpha-D-glucose</name>
        <dbReference type="ChEBI" id="CHEBI:58885"/>
    </ligand>
</feature>
<feature type="binding site" evidence="1">
    <location>
        <position position="385"/>
    </location>
    <ligand>
        <name>UDP-alpha-D-glucose</name>
        <dbReference type="ChEBI" id="CHEBI:58885"/>
    </ligand>
</feature>
<feature type="binding site" evidence="3">
    <location>
        <position position="400"/>
    </location>
    <ligand>
        <name>an anthocyanidin</name>
        <dbReference type="ChEBI" id="CHEBI:143576"/>
    </ligand>
</feature>
<feature type="binding site" evidence="1">
    <location>
        <position position="401"/>
    </location>
    <ligand>
        <name>UDP-alpha-D-glucose</name>
        <dbReference type="ChEBI" id="CHEBI:58885"/>
    </ligand>
</feature>
<feature type="binding site" evidence="1">
    <location>
        <position position="402"/>
    </location>
    <ligand>
        <name>UDP-alpha-D-glucose</name>
        <dbReference type="ChEBI" id="CHEBI:58885"/>
    </ligand>
</feature>
<dbReference type="EC" id="2.4.1.357" evidence="2"/>
<dbReference type="EMBL" id="FJ854498">
    <property type="protein sequence ID" value="ACZ44840.1"/>
    <property type="molecule type" value="mRNA"/>
</dbReference>
<dbReference type="SMR" id="D3UAG5"/>
<dbReference type="CAZy" id="GT1">
    <property type="family name" value="Glycosyltransferase Family 1"/>
</dbReference>
<dbReference type="BRENDA" id="2.4.1.357">
    <property type="organism ID" value="3164"/>
</dbReference>
<dbReference type="GO" id="GO:0035251">
    <property type="term" value="F:UDP-glucosyltransferase activity"/>
    <property type="evidence" value="ECO:0007669"/>
    <property type="project" value="InterPro"/>
</dbReference>
<dbReference type="CDD" id="cd03784">
    <property type="entry name" value="GT1_Gtf-like"/>
    <property type="match status" value="1"/>
</dbReference>
<dbReference type="FunFam" id="3.40.50.2000:FF:000020">
    <property type="entry name" value="Glycosyltransferase"/>
    <property type="match status" value="1"/>
</dbReference>
<dbReference type="FunFam" id="3.40.50.2000:FF:000095">
    <property type="entry name" value="Glycosyltransferase"/>
    <property type="match status" value="1"/>
</dbReference>
<dbReference type="Gene3D" id="3.40.50.2000">
    <property type="entry name" value="Glycogen Phosphorylase B"/>
    <property type="match status" value="2"/>
</dbReference>
<dbReference type="InterPro" id="IPR050481">
    <property type="entry name" value="UDP-glycosyltransf_plant"/>
</dbReference>
<dbReference type="InterPro" id="IPR002213">
    <property type="entry name" value="UDP_glucos_trans"/>
</dbReference>
<dbReference type="InterPro" id="IPR035595">
    <property type="entry name" value="UDP_glycos_trans_CS"/>
</dbReference>
<dbReference type="PANTHER" id="PTHR48048">
    <property type="entry name" value="GLYCOSYLTRANSFERASE"/>
    <property type="match status" value="1"/>
</dbReference>
<dbReference type="PANTHER" id="PTHR48048:SF20">
    <property type="entry name" value="GLYCOSYLTRANSFERASE"/>
    <property type="match status" value="1"/>
</dbReference>
<dbReference type="Pfam" id="PF00201">
    <property type="entry name" value="UDPGT"/>
    <property type="match status" value="1"/>
</dbReference>
<dbReference type="SUPFAM" id="SSF53756">
    <property type="entry name" value="UDP-Glycosyltransferase/glycogen phosphorylase"/>
    <property type="match status" value="1"/>
</dbReference>
<dbReference type="PROSITE" id="PS00375">
    <property type="entry name" value="UDPGT"/>
    <property type="match status" value="1"/>
</dbReference>
<protein>
    <recommendedName>
        <fullName evidence="5">Phloretin 2'-O-glucosyltransferase</fullName>
        <ecNumber evidence="2">2.4.1.357</ecNumber>
    </recommendedName>
    <alternativeName>
        <fullName evidence="5">UDP-glucose:phloretin 2'-O-glucosyltransferase</fullName>
    </alternativeName>
    <alternativeName>
        <fullName evidence="4">UDP-glycosyltransferase 88F1</fullName>
    </alternativeName>
</protein>
<gene>
    <name evidence="4" type="primary">UGT88F1</name>
</gene>
<organism>
    <name type="scientific">Malus domestica</name>
    <name type="common">Apple</name>
    <name type="synonym">Pyrus malus</name>
    <dbReference type="NCBI Taxonomy" id="3750"/>
    <lineage>
        <taxon>Eukaryota</taxon>
        <taxon>Viridiplantae</taxon>
        <taxon>Streptophyta</taxon>
        <taxon>Embryophyta</taxon>
        <taxon>Tracheophyta</taxon>
        <taxon>Spermatophyta</taxon>
        <taxon>Magnoliopsida</taxon>
        <taxon>eudicotyledons</taxon>
        <taxon>Gunneridae</taxon>
        <taxon>Pentapetalae</taxon>
        <taxon>rosids</taxon>
        <taxon>fabids</taxon>
        <taxon>Rosales</taxon>
        <taxon>Rosaceae</taxon>
        <taxon>Amygdaloideae</taxon>
        <taxon>Maleae</taxon>
        <taxon>Malus</taxon>
    </lineage>
</organism>
<accession>D3UAG5</accession>
<sequence length="483" mass="53600">MGDVIVLYASPGMGHIVSMVELGKFIVHRYGPHKFSITILYTCGSIVDTASIPVYIRRISHSHPFISFRQFPRVTNNITRNISVPAITFDFIRQNDPHVRSALQEISKSATVRAFIIDLFCTSALPIGKEFNIPTYYFRTSGAAILAAFLYLPKIDEQTKTTESFKDLRDTVFEFPGWKSPLKATHMVQLVLDRNDPAYSDMIYFCSHLPKSNGIIVNTFEELEPPSVLQAIAGGLCVPDGPTPPVYYVGPLIEEEKELSKDADAAEKEDCLSWLDKQPSRSVLFLCFGSMGSFPAAQLKEIANGLEASGQRFLWVVKKPPVEEKSKQVHGVDDFDLKGVLPEGFLERTADRGMVVKSWAPQVVVLKKESVGGFVTHCGWNSVLEAVVAGVPMIAWPLYAEQHMNRNVLVTDMEIAIGVEQRDEEGGFVSGEEVERRVRELMESEGGRVLRERCKKLGEMASAALGETGSSTRNLVNFVSSIT</sequence>
<proteinExistence type="evidence at transcript level"/>
<reference key="1">
    <citation type="journal article" date="2010" name="Plant Sci.">
        <title>Cloning and heterologous expression of glycosyltransferases from Malus x domestica and Pyrus communis, which convert phloretin to phloretin 2'-O-glucoside (phloridzin).</title>
        <authorList>
            <person name="Gosch C."/>
            <person name="Halbwirth H."/>
            <person name="Schneider B."/>
            <person name="Holscher D."/>
            <person name="Stich K."/>
        </authorList>
    </citation>
    <scope>NUCLEOTIDE SEQUENCE [MRNA]</scope>
    <source>
        <strain>cv. Rebella</strain>
    </source>
</reference>
<keyword id="KW-0328">Glycosyltransferase</keyword>
<keyword id="KW-0808">Transferase</keyword>
<name>88F1R_MALDO</name>